<name>Y1175_LEGPL</name>
<organism>
    <name type="scientific">Legionella pneumophila (strain Lens)</name>
    <dbReference type="NCBI Taxonomy" id="297245"/>
    <lineage>
        <taxon>Bacteria</taxon>
        <taxon>Pseudomonadati</taxon>
        <taxon>Pseudomonadota</taxon>
        <taxon>Gammaproteobacteria</taxon>
        <taxon>Legionellales</taxon>
        <taxon>Legionellaceae</taxon>
        <taxon>Legionella</taxon>
    </lineage>
</organism>
<accession>Q5WXC3</accession>
<protein>
    <recommendedName>
        <fullName evidence="1">Nucleotide-binding protein lpl1175</fullName>
    </recommendedName>
</protein>
<gene>
    <name type="ordered locus">lpl1175</name>
</gene>
<evidence type="ECO:0000255" key="1">
    <source>
        <dbReference type="HAMAP-Rule" id="MF_00632"/>
    </source>
</evidence>
<sequence>MPSFDIVSKMNEVDLRNAVDNAVREVSTRFDFRGVEATIELKDLTVTLRSESDFQVRQLEDLFRNHCSKRNLSTSGVDIEDEPVHSGKFYTLTMTFKQGIDQPTAKEIVKYIKETKAKVQTSIQGDKVRVTGKKRDDLQETIALLKKSNIELPLQYENFRD</sequence>
<feature type="chain" id="PRO_0000261944" description="Nucleotide-binding protein lpl1175">
    <location>
        <begin position="1"/>
        <end position="161"/>
    </location>
</feature>
<comment type="function">
    <text evidence="1">Nucleotide-binding protein.</text>
</comment>
<comment type="similarity">
    <text evidence="1">Belongs to the YajQ family.</text>
</comment>
<reference key="1">
    <citation type="journal article" date="2004" name="Nat. Genet.">
        <title>Evidence in the Legionella pneumophila genome for exploitation of host cell functions and high genome plasticity.</title>
        <authorList>
            <person name="Cazalet C."/>
            <person name="Rusniok C."/>
            <person name="Brueggemann H."/>
            <person name="Zidane N."/>
            <person name="Magnier A."/>
            <person name="Ma L."/>
            <person name="Tichit M."/>
            <person name="Jarraud S."/>
            <person name="Bouchier C."/>
            <person name="Vandenesch F."/>
            <person name="Kunst F."/>
            <person name="Etienne J."/>
            <person name="Glaser P."/>
            <person name="Buchrieser C."/>
        </authorList>
    </citation>
    <scope>NUCLEOTIDE SEQUENCE [LARGE SCALE GENOMIC DNA]</scope>
    <source>
        <strain>Lens</strain>
    </source>
</reference>
<proteinExistence type="inferred from homology"/>
<dbReference type="EMBL" id="CR628337">
    <property type="protein sequence ID" value="CAH15414.1"/>
    <property type="molecule type" value="Genomic_DNA"/>
</dbReference>
<dbReference type="RefSeq" id="WP_011213523.1">
    <property type="nucleotide sequence ID" value="NC_006369.1"/>
</dbReference>
<dbReference type="SMR" id="Q5WXC3"/>
<dbReference type="KEGG" id="lpf:lpl1175"/>
<dbReference type="LegioList" id="lpl1175"/>
<dbReference type="HOGENOM" id="CLU_099839_1_0_6"/>
<dbReference type="Proteomes" id="UP000002517">
    <property type="component" value="Chromosome"/>
</dbReference>
<dbReference type="GO" id="GO:0005829">
    <property type="term" value="C:cytosol"/>
    <property type="evidence" value="ECO:0007669"/>
    <property type="project" value="TreeGrafter"/>
</dbReference>
<dbReference type="GO" id="GO:0000166">
    <property type="term" value="F:nucleotide binding"/>
    <property type="evidence" value="ECO:0007669"/>
    <property type="project" value="TreeGrafter"/>
</dbReference>
<dbReference type="CDD" id="cd11740">
    <property type="entry name" value="YajQ_like"/>
    <property type="match status" value="1"/>
</dbReference>
<dbReference type="Gene3D" id="3.30.70.860">
    <property type="match status" value="1"/>
</dbReference>
<dbReference type="Gene3D" id="3.30.70.990">
    <property type="entry name" value="YajQ-like, domain 2"/>
    <property type="match status" value="1"/>
</dbReference>
<dbReference type="HAMAP" id="MF_00632">
    <property type="entry name" value="YajQ"/>
    <property type="match status" value="1"/>
</dbReference>
<dbReference type="InterPro" id="IPR007551">
    <property type="entry name" value="DUF520"/>
</dbReference>
<dbReference type="InterPro" id="IPR035571">
    <property type="entry name" value="UPF0234-like_C"/>
</dbReference>
<dbReference type="InterPro" id="IPR035570">
    <property type="entry name" value="UPF0234_N"/>
</dbReference>
<dbReference type="InterPro" id="IPR036183">
    <property type="entry name" value="YajQ-like_sf"/>
</dbReference>
<dbReference type="NCBIfam" id="NF003819">
    <property type="entry name" value="PRK05412.1"/>
    <property type="match status" value="1"/>
</dbReference>
<dbReference type="PANTHER" id="PTHR30476">
    <property type="entry name" value="UPF0234 PROTEIN YAJQ"/>
    <property type="match status" value="1"/>
</dbReference>
<dbReference type="PANTHER" id="PTHR30476:SF0">
    <property type="entry name" value="UPF0234 PROTEIN YAJQ"/>
    <property type="match status" value="1"/>
</dbReference>
<dbReference type="Pfam" id="PF04461">
    <property type="entry name" value="DUF520"/>
    <property type="match status" value="1"/>
</dbReference>
<dbReference type="SUPFAM" id="SSF89963">
    <property type="entry name" value="YajQ-like"/>
    <property type="match status" value="2"/>
</dbReference>
<keyword id="KW-0547">Nucleotide-binding</keyword>